<evidence type="ECO:0000255" key="1">
    <source>
        <dbReference type="HAMAP-Rule" id="MF_00139"/>
    </source>
</evidence>
<evidence type="ECO:0000255" key="2">
    <source>
        <dbReference type="PROSITE-ProRule" id="PRU01202"/>
    </source>
</evidence>
<feature type="chain" id="PRO_1000122980" description="Bifunctional purine biosynthesis protein PurH">
    <location>
        <begin position="1"/>
        <end position="530"/>
    </location>
</feature>
<feature type="domain" description="MGS-like" evidence="2">
    <location>
        <begin position="1"/>
        <end position="148"/>
    </location>
</feature>
<dbReference type="EC" id="2.1.2.3" evidence="1"/>
<dbReference type="EC" id="3.5.4.10" evidence="1"/>
<dbReference type="EMBL" id="FM954972">
    <property type="protein sequence ID" value="CAV20247.1"/>
    <property type="molecule type" value="Genomic_DNA"/>
</dbReference>
<dbReference type="SMR" id="B7VM57"/>
<dbReference type="STRING" id="575788.VS_2951"/>
<dbReference type="KEGG" id="vsp:VS_2951"/>
<dbReference type="PATRIC" id="fig|575788.5.peg.4160"/>
<dbReference type="eggNOG" id="COG0138">
    <property type="taxonomic scope" value="Bacteria"/>
</dbReference>
<dbReference type="HOGENOM" id="CLU_016316_5_2_6"/>
<dbReference type="UniPathway" id="UPA00074">
    <property type="reaction ID" value="UER00133"/>
</dbReference>
<dbReference type="UniPathway" id="UPA00074">
    <property type="reaction ID" value="UER00135"/>
</dbReference>
<dbReference type="Proteomes" id="UP000009100">
    <property type="component" value="Chromosome 1"/>
</dbReference>
<dbReference type="GO" id="GO:0005829">
    <property type="term" value="C:cytosol"/>
    <property type="evidence" value="ECO:0007669"/>
    <property type="project" value="TreeGrafter"/>
</dbReference>
<dbReference type="GO" id="GO:0003937">
    <property type="term" value="F:IMP cyclohydrolase activity"/>
    <property type="evidence" value="ECO:0007669"/>
    <property type="project" value="UniProtKB-UniRule"/>
</dbReference>
<dbReference type="GO" id="GO:0004643">
    <property type="term" value="F:phosphoribosylaminoimidazolecarboxamide formyltransferase activity"/>
    <property type="evidence" value="ECO:0007669"/>
    <property type="project" value="UniProtKB-UniRule"/>
</dbReference>
<dbReference type="GO" id="GO:0006189">
    <property type="term" value="P:'de novo' IMP biosynthetic process"/>
    <property type="evidence" value="ECO:0007669"/>
    <property type="project" value="UniProtKB-UniRule"/>
</dbReference>
<dbReference type="CDD" id="cd01421">
    <property type="entry name" value="IMPCH"/>
    <property type="match status" value="1"/>
</dbReference>
<dbReference type="FunFam" id="3.40.140.20:FF:000001">
    <property type="entry name" value="Bifunctional purine biosynthesis protein PurH"/>
    <property type="match status" value="1"/>
</dbReference>
<dbReference type="FunFam" id="3.40.140.20:FF:000002">
    <property type="entry name" value="Bifunctional purine biosynthesis protein PurH"/>
    <property type="match status" value="1"/>
</dbReference>
<dbReference type="FunFam" id="3.40.50.1380:FF:000001">
    <property type="entry name" value="Bifunctional purine biosynthesis protein PurH"/>
    <property type="match status" value="1"/>
</dbReference>
<dbReference type="Gene3D" id="3.40.140.20">
    <property type="match status" value="2"/>
</dbReference>
<dbReference type="Gene3D" id="3.40.50.1380">
    <property type="entry name" value="Methylglyoxal synthase-like domain"/>
    <property type="match status" value="1"/>
</dbReference>
<dbReference type="HAMAP" id="MF_00139">
    <property type="entry name" value="PurH"/>
    <property type="match status" value="1"/>
</dbReference>
<dbReference type="InterPro" id="IPR024051">
    <property type="entry name" value="AICAR_Tfase_dup_dom_sf"/>
</dbReference>
<dbReference type="InterPro" id="IPR016193">
    <property type="entry name" value="Cytidine_deaminase-like"/>
</dbReference>
<dbReference type="InterPro" id="IPR011607">
    <property type="entry name" value="MGS-like_dom"/>
</dbReference>
<dbReference type="InterPro" id="IPR036914">
    <property type="entry name" value="MGS-like_dom_sf"/>
</dbReference>
<dbReference type="InterPro" id="IPR002695">
    <property type="entry name" value="PurH-like"/>
</dbReference>
<dbReference type="NCBIfam" id="NF002049">
    <property type="entry name" value="PRK00881.1"/>
    <property type="match status" value="1"/>
</dbReference>
<dbReference type="NCBIfam" id="TIGR00355">
    <property type="entry name" value="purH"/>
    <property type="match status" value="1"/>
</dbReference>
<dbReference type="PANTHER" id="PTHR11692:SF0">
    <property type="entry name" value="BIFUNCTIONAL PURINE BIOSYNTHESIS PROTEIN ATIC"/>
    <property type="match status" value="1"/>
</dbReference>
<dbReference type="PANTHER" id="PTHR11692">
    <property type="entry name" value="BIFUNCTIONAL PURINE BIOSYNTHESIS PROTEIN PURH"/>
    <property type="match status" value="1"/>
</dbReference>
<dbReference type="Pfam" id="PF01808">
    <property type="entry name" value="AICARFT_IMPCHas"/>
    <property type="match status" value="1"/>
</dbReference>
<dbReference type="Pfam" id="PF02142">
    <property type="entry name" value="MGS"/>
    <property type="match status" value="1"/>
</dbReference>
<dbReference type="PIRSF" id="PIRSF000414">
    <property type="entry name" value="AICARFT_IMPCHas"/>
    <property type="match status" value="1"/>
</dbReference>
<dbReference type="SMART" id="SM00798">
    <property type="entry name" value="AICARFT_IMPCHas"/>
    <property type="match status" value="1"/>
</dbReference>
<dbReference type="SMART" id="SM00851">
    <property type="entry name" value="MGS"/>
    <property type="match status" value="1"/>
</dbReference>
<dbReference type="SUPFAM" id="SSF53927">
    <property type="entry name" value="Cytidine deaminase-like"/>
    <property type="match status" value="1"/>
</dbReference>
<dbReference type="SUPFAM" id="SSF52335">
    <property type="entry name" value="Methylglyoxal synthase-like"/>
    <property type="match status" value="1"/>
</dbReference>
<dbReference type="PROSITE" id="PS51855">
    <property type="entry name" value="MGS"/>
    <property type="match status" value="1"/>
</dbReference>
<accession>B7VM57</accession>
<protein>
    <recommendedName>
        <fullName evidence="1">Bifunctional purine biosynthesis protein PurH</fullName>
    </recommendedName>
    <domain>
        <recommendedName>
            <fullName evidence="1">Phosphoribosylaminoimidazolecarboxamide formyltransferase</fullName>
            <ecNumber evidence="1">2.1.2.3</ecNumber>
        </recommendedName>
        <alternativeName>
            <fullName evidence="1">AICAR transformylase</fullName>
        </alternativeName>
    </domain>
    <domain>
        <recommendedName>
            <fullName evidence="1">IMP cyclohydrolase</fullName>
            <ecNumber evidence="1">3.5.4.10</ecNumber>
        </recommendedName>
        <alternativeName>
            <fullName evidence="1">ATIC</fullName>
        </alternativeName>
        <alternativeName>
            <fullName evidence="1">IMP synthase</fullName>
        </alternativeName>
        <alternativeName>
            <fullName evidence="1">Inosinicase</fullName>
        </alternativeName>
    </domain>
</protein>
<proteinExistence type="inferred from homology"/>
<gene>
    <name evidence="1" type="primary">purH</name>
    <name type="ordered locus">VS_2951</name>
</gene>
<comment type="catalytic activity">
    <reaction evidence="1">
        <text>(6R)-10-formyltetrahydrofolate + 5-amino-1-(5-phospho-beta-D-ribosyl)imidazole-4-carboxamide = 5-formamido-1-(5-phospho-D-ribosyl)imidazole-4-carboxamide + (6S)-5,6,7,8-tetrahydrofolate</text>
        <dbReference type="Rhea" id="RHEA:22192"/>
        <dbReference type="ChEBI" id="CHEBI:57453"/>
        <dbReference type="ChEBI" id="CHEBI:58467"/>
        <dbReference type="ChEBI" id="CHEBI:58475"/>
        <dbReference type="ChEBI" id="CHEBI:195366"/>
        <dbReference type="EC" id="2.1.2.3"/>
    </reaction>
</comment>
<comment type="catalytic activity">
    <reaction evidence="1">
        <text>IMP + H2O = 5-formamido-1-(5-phospho-D-ribosyl)imidazole-4-carboxamide</text>
        <dbReference type="Rhea" id="RHEA:18445"/>
        <dbReference type="ChEBI" id="CHEBI:15377"/>
        <dbReference type="ChEBI" id="CHEBI:58053"/>
        <dbReference type="ChEBI" id="CHEBI:58467"/>
        <dbReference type="EC" id="3.5.4.10"/>
    </reaction>
</comment>
<comment type="pathway">
    <text evidence="1">Purine metabolism; IMP biosynthesis via de novo pathway; 5-formamido-1-(5-phospho-D-ribosyl)imidazole-4-carboxamide from 5-amino-1-(5-phospho-D-ribosyl)imidazole-4-carboxamide (10-formyl THF route): step 1/1.</text>
</comment>
<comment type="pathway">
    <text evidence="1">Purine metabolism; IMP biosynthesis via de novo pathway; IMP from 5-formamido-1-(5-phospho-D-ribosyl)imidazole-4-carboxamide: step 1/1.</text>
</comment>
<comment type="domain">
    <text evidence="1">The IMP cyclohydrolase activity resides in the N-terminal region.</text>
</comment>
<comment type="similarity">
    <text evidence="1">Belongs to the PurH family.</text>
</comment>
<sequence>MNNARPIRRALISVSDKTGIVEFAQALANRGVDILSTGGTARLLAEKGISVTEVSDYTGFPEMMDGRVKTLHPKVHGGVLGRRGQDDDVMETHGINPIDMVVVNLYPFAETVAKEGCTLADAVENIDIGGPTMVRSAAKNHKDVTIVVNAHDYERVVAEMDANEKSLTLETRFDLAIAAFEHTASYDGMIANYFGTMVPSYGENKEGDEESKFPRTFNQQFEKKQDMRYGENSHQAAAFYVEANPEEASVSTARQIQGKALSYNNIADTDAALECVKEFDEPACVIVKHANPCGVALGEDILEAYDRAFKTDPTSAFGGIIAFNRELDAATATAITERQFVEVIIAPSVSAEAVAIVAAKKNLRLLECGEWTTKTTGFDVKRVNGGLLVQDRDQGMVSEDDLKVVSKRQPTAEELKDALFCWKVAKYVKSNAIVYSKGDMTIGVGAGQMSRVYSAKIAGIKAADEGLQVEGCVMASDAFFPFRDGIDAAAEAGIKCVIQPGGSMRDDEVIAAADEHGMAMIFTGMRHFRH</sequence>
<organism>
    <name type="scientific">Vibrio atlanticus (strain LGP32)</name>
    <name type="common">Vibrio splendidus (strain Mel32)</name>
    <dbReference type="NCBI Taxonomy" id="575788"/>
    <lineage>
        <taxon>Bacteria</taxon>
        <taxon>Pseudomonadati</taxon>
        <taxon>Pseudomonadota</taxon>
        <taxon>Gammaproteobacteria</taxon>
        <taxon>Vibrionales</taxon>
        <taxon>Vibrionaceae</taxon>
        <taxon>Vibrio</taxon>
    </lineage>
</organism>
<reference key="1">
    <citation type="submission" date="2009-02" db="EMBL/GenBank/DDBJ databases">
        <title>Vibrio splendidus str. LGP32 complete genome.</title>
        <authorList>
            <person name="Mazel D."/>
            <person name="Le Roux F."/>
        </authorList>
    </citation>
    <scope>NUCLEOTIDE SEQUENCE [LARGE SCALE GENOMIC DNA]</scope>
    <source>
        <strain>LGP32</strain>
    </source>
</reference>
<name>PUR9_VIBA3</name>
<keyword id="KW-0378">Hydrolase</keyword>
<keyword id="KW-0511">Multifunctional enzyme</keyword>
<keyword id="KW-0658">Purine biosynthesis</keyword>
<keyword id="KW-0808">Transferase</keyword>